<protein>
    <recommendedName>
        <fullName>Aquaporin NIP1-1</fullName>
    </recommendedName>
    <alternativeName>
        <fullName>NOD26-like intrinsic protein 1-1</fullName>
        <shortName>AtNIP1;1</shortName>
    </alternativeName>
    <alternativeName>
        <fullName>Nodulin-26-like major intrinsic protein 1</fullName>
        <shortName>NodLikeMip1</shortName>
        <shortName>Protein NLM1</shortName>
    </alternativeName>
</protein>
<sequence length="296" mass="31715">MADISGNGYGNAREEVVMVNLKDEVEHQQEMEDIHNPRPLKKQDSLLSVSVPFLQKLIAEFLGTYFLVFTGCASVVVNMQNDNVVTLPGIAIVWGLTIMVLIYSLGHISGAHINPAVTIAFASCGRFPLKQVPAYVISQVIGSTLAAATLRLLFGLDHDVCSGKHDVFIGSSPVGSDLQAFTMEFIVTFYLMFIISGVATDNRAIGELAGLAIGSTVLLNVLIAAPVSSASMNPGRSLGPALVYGCYKGIWIYLVAPTLGAIAGAWVYNTVRYTDKPLREITKSGSFLKTVRIGST</sequence>
<organism>
    <name type="scientific">Arabidopsis thaliana</name>
    <name type="common">Mouse-ear cress</name>
    <dbReference type="NCBI Taxonomy" id="3702"/>
    <lineage>
        <taxon>Eukaryota</taxon>
        <taxon>Viridiplantae</taxon>
        <taxon>Streptophyta</taxon>
        <taxon>Embryophyta</taxon>
        <taxon>Tracheophyta</taxon>
        <taxon>Spermatophyta</taxon>
        <taxon>Magnoliopsida</taxon>
        <taxon>eudicotyledons</taxon>
        <taxon>Gunneridae</taxon>
        <taxon>Pentapetalae</taxon>
        <taxon>rosids</taxon>
        <taxon>malvids</taxon>
        <taxon>Brassicales</taxon>
        <taxon>Brassicaceae</taxon>
        <taxon>Camelineae</taxon>
        <taxon>Arabidopsis</taxon>
    </lineage>
</organism>
<evidence type="ECO:0000250" key="1">
    <source>
        <dbReference type="UniProtKB" id="P43286"/>
    </source>
</evidence>
<evidence type="ECO:0000250" key="2">
    <source>
        <dbReference type="UniProtKB" id="P61837"/>
    </source>
</evidence>
<evidence type="ECO:0000255" key="3"/>
<evidence type="ECO:0000269" key="4">
    <source>
    </source>
</evidence>
<evidence type="ECO:0000269" key="5">
    <source>
    </source>
</evidence>
<evidence type="ECO:0000305" key="6"/>
<dbReference type="EMBL" id="Y07625">
    <property type="protein sequence ID" value="CAA68906.1"/>
    <property type="status" value="ALT_INIT"/>
    <property type="molecule type" value="mRNA"/>
</dbReference>
<dbReference type="EMBL" id="AL021711">
    <property type="protein sequence ID" value="CAA16760.2"/>
    <property type="status" value="ALT_SEQ"/>
    <property type="molecule type" value="Genomic_DNA"/>
</dbReference>
<dbReference type="EMBL" id="AL161550">
    <property type="protein sequence ID" value="CAB78905.1"/>
    <property type="status" value="ALT_SEQ"/>
    <property type="molecule type" value="Genomic_DNA"/>
</dbReference>
<dbReference type="EMBL" id="CP002687">
    <property type="protein sequence ID" value="AEE84127.1"/>
    <property type="molecule type" value="Genomic_DNA"/>
</dbReference>
<dbReference type="EMBL" id="AY063796">
    <property type="protein sequence ID" value="AAL36152.1"/>
    <property type="molecule type" value="mRNA"/>
</dbReference>
<dbReference type="EMBL" id="AY117197">
    <property type="protein sequence ID" value="AAM51272.1"/>
    <property type="molecule type" value="mRNA"/>
</dbReference>
<dbReference type="EMBL" id="AY084497">
    <property type="protein sequence ID" value="AAM61066.1"/>
    <property type="molecule type" value="mRNA"/>
</dbReference>
<dbReference type="PIR" id="H85214">
    <property type="entry name" value="H85214"/>
</dbReference>
<dbReference type="PIR" id="T05040">
    <property type="entry name" value="T05040"/>
</dbReference>
<dbReference type="RefSeq" id="NP_567572.1">
    <property type="nucleotide sequence ID" value="NM_118021.4"/>
</dbReference>
<dbReference type="SMR" id="Q8VZW1"/>
<dbReference type="BioGRID" id="12934">
    <property type="interactions" value="184"/>
</dbReference>
<dbReference type="FunCoup" id="Q8VZW1">
    <property type="interactions" value="47"/>
</dbReference>
<dbReference type="IntAct" id="Q8VZW1">
    <property type="interactions" value="184"/>
</dbReference>
<dbReference type="STRING" id="3702.Q8VZW1"/>
<dbReference type="TCDB" id="1.A.8.12.8">
    <property type="family name" value="the major intrinsic protein (mip) family"/>
</dbReference>
<dbReference type="PaxDb" id="3702-AT4G19030.1"/>
<dbReference type="ProteomicsDB" id="236827"/>
<dbReference type="EnsemblPlants" id="AT4G19030.1">
    <property type="protein sequence ID" value="AT4G19030.1"/>
    <property type="gene ID" value="AT4G19030"/>
</dbReference>
<dbReference type="GeneID" id="827641"/>
<dbReference type="Gramene" id="AT4G19030.1">
    <property type="protein sequence ID" value="AT4G19030.1"/>
    <property type="gene ID" value="AT4G19030"/>
</dbReference>
<dbReference type="KEGG" id="ath:AT4G19030"/>
<dbReference type="Araport" id="AT4G19030"/>
<dbReference type="TAIR" id="AT4G19030">
    <property type="gene designation" value="NLM1"/>
</dbReference>
<dbReference type="eggNOG" id="KOG0223">
    <property type="taxonomic scope" value="Eukaryota"/>
</dbReference>
<dbReference type="HOGENOM" id="CLU_020019_3_1_1"/>
<dbReference type="InParanoid" id="Q8VZW1"/>
<dbReference type="OMA" id="YGCYKGI"/>
<dbReference type="OrthoDB" id="3222at2759"/>
<dbReference type="PhylomeDB" id="Q8VZW1"/>
<dbReference type="BioCyc" id="MetaCyc:MONOMER-21673"/>
<dbReference type="PRO" id="PR:Q8VZW1"/>
<dbReference type="Proteomes" id="UP000006548">
    <property type="component" value="Chromosome 4"/>
</dbReference>
<dbReference type="ExpressionAtlas" id="Q8VZW1">
    <property type="expression patterns" value="baseline and differential"/>
</dbReference>
<dbReference type="GO" id="GO:0005886">
    <property type="term" value="C:plasma membrane"/>
    <property type="evidence" value="ECO:0000314"/>
    <property type="project" value="TAIR"/>
</dbReference>
<dbReference type="GO" id="GO:0015105">
    <property type="term" value="F:arsenite transmembrane transporter activity"/>
    <property type="evidence" value="ECO:0000314"/>
    <property type="project" value="TAIR"/>
</dbReference>
<dbReference type="GO" id="GO:0015250">
    <property type="term" value="F:water channel activity"/>
    <property type="evidence" value="ECO:0000314"/>
    <property type="project" value="TAIR"/>
</dbReference>
<dbReference type="GO" id="GO:0015700">
    <property type="term" value="P:arsenite transport"/>
    <property type="evidence" value="ECO:0000314"/>
    <property type="project" value="TAIR"/>
</dbReference>
<dbReference type="GO" id="GO:0080170">
    <property type="term" value="P:hydrogen peroxide transmembrane transport"/>
    <property type="evidence" value="ECO:0000314"/>
    <property type="project" value="TAIR"/>
</dbReference>
<dbReference type="GO" id="GO:0031347">
    <property type="term" value="P:regulation of defense response"/>
    <property type="evidence" value="ECO:0000315"/>
    <property type="project" value="TAIR"/>
</dbReference>
<dbReference type="GO" id="GO:0046685">
    <property type="term" value="P:response to arsenic-containing substance"/>
    <property type="evidence" value="ECO:0000315"/>
    <property type="project" value="TAIR"/>
</dbReference>
<dbReference type="CDD" id="cd00333">
    <property type="entry name" value="MIP"/>
    <property type="match status" value="1"/>
</dbReference>
<dbReference type="FunFam" id="1.20.1080.10:FF:000029">
    <property type="entry name" value="Aquaporin NIP1-1"/>
    <property type="match status" value="1"/>
</dbReference>
<dbReference type="Gene3D" id="1.20.1080.10">
    <property type="entry name" value="Glycerol uptake facilitator protein"/>
    <property type="match status" value="1"/>
</dbReference>
<dbReference type="InterPro" id="IPR023271">
    <property type="entry name" value="Aquaporin-like"/>
</dbReference>
<dbReference type="InterPro" id="IPR034294">
    <property type="entry name" value="Aquaporin_transptr"/>
</dbReference>
<dbReference type="InterPro" id="IPR000425">
    <property type="entry name" value="MIP"/>
</dbReference>
<dbReference type="InterPro" id="IPR022357">
    <property type="entry name" value="MIP_CS"/>
</dbReference>
<dbReference type="NCBIfam" id="TIGR00861">
    <property type="entry name" value="MIP"/>
    <property type="match status" value="1"/>
</dbReference>
<dbReference type="PANTHER" id="PTHR45724:SF13">
    <property type="entry name" value="AQUAPORIN NIP1-1-RELATED"/>
    <property type="match status" value="1"/>
</dbReference>
<dbReference type="PANTHER" id="PTHR45724">
    <property type="entry name" value="AQUAPORIN NIP2-1"/>
    <property type="match status" value="1"/>
</dbReference>
<dbReference type="Pfam" id="PF00230">
    <property type="entry name" value="MIP"/>
    <property type="match status" value="1"/>
</dbReference>
<dbReference type="PRINTS" id="PR00783">
    <property type="entry name" value="MINTRINSICP"/>
</dbReference>
<dbReference type="SUPFAM" id="SSF81338">
    <property type="entry name" value="Aquaporin-like"/>
    <property type="match status" value="1"/>
</dbReference>
<dbReference type="PROSITE" id="PS00221">
    <property type="entry name" value="MIP"/>
    <property type="match status" value="1"/>
</dbReference>
<keyword id="KW-0007">Acetylation</keyword>
<keyword id="KW-0472">Membrane</keyword>
<keyword id="KW-0597">Phosphoprotein</keyword>
<keyword id="KW-1185">Reference proteome</keyword>
<keyword id="KW-0677">Repeat</keyword>
<keyword id="KW-0812">Transmembrane</keyword>
<keyword id="KW-1133">Transmembrane helix</keyword>
<keyword id="KW-0813">Transport</keyword>
<reference key="1">
    <citation type="journal article" date="1997" name="Plant Physiol.">
        <title>The major intrinsic protein family of Arabidopsis has 23 members that form three distinct groups with functional aquaporins in each group.</title>
        <authorList>
            <person name="Weig A.R."/>
            <person name="Deswarte C."/>
            <person name="Chrispeels M.J."/>
        </authorList>
    </citation>
    <scope>NUCLEOTIDE SEQUENCE [MRNA]</scope>
</reference>
<reference key="2">
    <citation type="journal article" date="1999" name="Nature">
        <title>Sequence and analysis of chromosome 4 of the plant Arabidopsis thaliana.</title>
        <authorList>
            <person name="Mayer K.F.X."/>
            <person name="Schueller C."/>
            <person name="Wambutt R."/>
            <person name="Murphy G."/>
            <person name="Volckaert G."/>
            <person name="Pohl T."/>
            <person name="Duesterhoeft A."/>
            <person name="Stiekema W."/>
            <person name="Entian K.-D."/>
            <person name="Terryn N."/>
            <person name="Harris B."/>
            <person name="Ansorge W."/>
            <person name="Brandt P."/>
            <person name="Grivell L.A."/>
            <person name="Rieger M."/>
            <person name="Weichselgartner M."/>
            <person name="de Simone V."/>
            <person name="Obermaier B."/>
            <person name="Mache R."/>
            <person name="Mueller M."/>
            <person name="Kreis M."/>
            <person name="Delseny M."/>
            <person name="Puigdomenech P."/>
            <person name="Watson M."/>
            <person name="Schmidtheini T."/>
            <person name="Reichert B."/>
            <person name="Portetelle D."/>
            <person name="Perez-Alonso M."/>
            <person name="Boutry M."/>
            <person name="Bancroft I."/>
            <person name="Vos P."/>
            <person name="Hoheisel J."/>
            <person name="Zimmermann W."/>
            <person name="Wedler H."/>
            <person name="Ridley P."/>
            <person name="Langham S.-A."/>
            <person name="McCullagh B."/>
            <person name="Bilham L."/>
            <person name="Robben J."/>
            <person name="van der Schueren J."/>
            <person name="Grymonprez B."/>
            <person name="Chuang Y.-J."/>
            <person name="Vandenbussche F."/>
            <person name="Braeken M."/>
            <person name="Weltjens I."/>
            <person name="Voet M."/>
            <person name="Bastiaens I."/>
            <person name="Aert R."/>
            <person name="Defoor E."/>
            <person name="Weitzenegger T."/>
            <person name="Bothe G."/>
            <person name="Ramsperger U."/>
            <person name="Hilbert H."/>
            <person name="Braun M."/>
            <person name="Holzer E."/>
            <person name="Brandt A."/>
            <person name="Peters S."/>
            <person name="van Staveren M."/>
            <person name="Dirkse W."/>
            <person name="Mooijman P."/>
            <person name="Klein Lankhorst R."/>
            <person name="Rose M."/>
            <person name="Hauf J."/>
            <person name="Koetter P."/>
            <person name="Berneiser S."/>
            <person name="Hempel S."/>
            <person name="Feldpausch M."/>
            <person name="Lamberth S."/>
            <person name="Van den Daele H."/>
            <person name="De Keyser A."/>
            <person name="Buysshaert C."/>
            <person name="Gielen J."/>
            <person name="Villarroel R."/>
            <person name="De Clercq R."/>
            <person name="van Montagu M."/>
            <person name="Rogers J."/>
            <person name="Cronin A."/>
            <person name="Quail M.A."/>
            <person name="Bray-Allen S."/>
            <person name="Clark L."/>
            <person name="Doggett J."/>
            <person name="Hall S."/>
            <person name="Kay M."/>
            <person name="Lennard N."/>
            <person name="McLay K."/>
            <person name="Mayes R."/>
            <person name="Pettett A."/>
            <person name="Rajandream M.A."/>
            <person name="Lyne M."/>
            <person name="Benes V."/>
            <person name="Rechmann S."/>
            <person name="Borkova D."/>
            <person name="Bloecker H."/>
            <person name="Scharfe M."/>
            <person name="Grimm M."/>
            <person name="Loehnert T.-H."/>
            <person name="Dose S."/>
            <person name="de Haan M."/>
            <person name="Maarse A.C."/>
            <person name="Schaefer M."/>
            <person name="Mueller-Auer S."/>
            <person name="Gabel C."/>
            <person name="Fuchs M."/>
            <person name="Fartmann B."/>
            <person name="Granderath K."/>
            <person name="Dauner D."/>
            <person name="Herzl A."/>
            <person name="Neumann S."/>
            <person name="Argiriou A."/>
            <person name="Vitale D."/>
            <person name="Liguori R."/>
            <person name="Piravandi E."/>
            <person name="Massenet O."/>
            <person name="Quigley F."/>
            <person name="Clabauld G."/>
            <person name="Muendlein A."/>
            <person name="Felber R."/>
            <person name="Schnabl S."/>
            <person name="Hiller R."/>
            <person name="Schmidt W."/>
            <person name="Lecharny A."/>
            <person name="Aubourg S."/>
            <person name="Chefdor F."/>
            <person name="Cooke R."/>
            <person name="Berger C."/>
            <person name="Monfort A."/>
            <person name="Casacuberta E."/>
            <person name="Gibbons T."/>
            <person name="Weber N."/>
            <person name="Vandenbol M."/>
            <person name="Bargues M."/>
            <person name="Terol J."/>
            <person name="Torres A."/>
            <person name="Perez-Perez A."/>
            <person name="Purnelle B."/>
            <person name="Bent E."/>
            <person name="Johnson S."/>
            <person name="Tacon D."/>
            <person name="Jesse T."/>
            <person name="Heijnen L."/>
            <person name="Schwarz S."/>
            <person name="Scholler P."/>
            <person name="Heber S."/>
            <person name="Francs P."/>
            <person name="Bielke C."/>
            <person name="Frishman D."/>
            <person name="Haase D."/>
            <person name="Lemcke K."/>
            <person name="Mewes H.-W."/>
            <person name="Stocker S."/>
            <person name="Zaccaria P."/>
            <person name="Bevan M."/>
            <person name="Wilson R.K."/>
            <person name="de la Bastide M."/>
            <person name="Habermann K."/>
            <person name="Parnell L."/>
            <person name="Dedhia N."/>
            <person name="Gnoj L."/>
            <person name="Schutz K."/>
            <person name="Huang E."/>
            <person name="Spiegel L."/>
            <person name="Sekhon M."/>
            <person name="Murray J."/>
            <person name="Sheet P."/>
            <person name="Cordes M."/>
            <person name="Abu-Threideh J."/>
            <person name="Stoneking T."/>
            <person name="Kalicki J."/>
            <person name="Graves T."/>
            <person name="Harmon G."/>
            <person name="Edwards J."/>
            <person name="Latreille P."/>
            <person name="Courtney L."/>
            <person name="Cloud J."/>
            <person name="Abbott A."/>
            <person name="Scott K."/>
            <person name="Johnson D."/>
            <person name="Minx P."/>
            <person name="Bentley D."/>
            <person name="Fulton B."/>
            <person name="Miller N."/>
            <person name="Greco T."/>
            <person name="Kemp K."/>
            <person name="Kramer J."/>
            <person name="Fulton L."/>
            <person name="Mardis E."/>
            <person name="Dante M."/>
            <person name="Pepin K."/>
            <person name="Hillier L.W."/>
            <person name="Nelson J."/>
            <person name="Spieth J."/>
            <person name="Ryan E."/>
            <person name="Andrews S."/>
            <person name="Geisel C."/>
            <person name="Layman D."/>
            <person name="Du H."/>
            <person name="Ali J."/>
            <person name="Berghoff A."/>
            <person name="Jones K."/>
            <person name="Drone K."/>
            <person name="Cotton M."/>
            <person name="Joshu C."/>
            <person name="Antonoiu B."/>
            <person name="Zidanic M."/>
            <person name="Strong C."/>
            <person name="Sun H."/>
            <person name="Lamar B."/>
            <person name="Yordan C."/>
            <person name="Ma P."/>
            <person name="Zhong J."/>
            <person name="Preston R."/>
            <person name="Vil D."/>
            <person name="Shekher M."/>
            <person name="Matero A."/>
            <person name="Shah R."/>
            <person name="Swaby I.K."/>
            <person name="O'Shaughnessy A."/>
            <person name="Rodriguez M."/>
            <person name="Hoffman J."/>
            <person name="Till S."/>
            <person name="Granat S."/>
            <person name="Shohdy N."/>
            <person name="Hasegawa A."/>
            <person name="Hameed A."/>
            <person name="Lodhi M."/>
            <person name="Johnson A."/>
            <person name="Chen E."/>
            <person name="Marra M.A."/>
            <person name="Martienssen R."/>
            <person name="McCombie W.R."/>
        </authorList>
    </citation>
    <scope>NUCLEOTIDE SEQUENCE [LARGE SCALE GENOMIC DNA]</scope>
    <source>
        <strain>cv. Columbia</strain>
    </source>
</reference>
<reference key="3">
    <citation type="journal article" date="2017" name="Plant J.">
        <title>Araport11: a complete reannotation of the Arabidopsis thaliana reference genome.</title>
        <authorList>
            <person name="Cheng C.Y."/>
            <person name="Krishnakumar V."/>
            <person name="Chan A.P."/>
            <person name="Thibaud-Nissen F."/>
            <person name="Schobel S."/>
            <person name="Town C.D."/>
        </authorList>
    </citation>
    <scope>GENOME REANNOTATION</scope>
    <source>
        <strain>cv. Columbia</strain>
    </source>
</reference>
<reference key="4">
    <citation type="journal article" date="2003" name="Science">
        <title>Empirical analysis of transcriptional activity in the Arabidopsis genome.</title>
        <authorList>
            <person name="Yamada K."/>
            <person name="Lim J."/>
            <person name="Dale J.M."/>
            <person name="Chen H."/>
            <person name="Shinn P."/>
            <person name="Palm C.J."/>
            <person name="Southwick A.M."/>
            <person name="Wu H.C."/>
            <person name="Kim C.J."/>
            <person name="Nguyen M."/>
            <person name="Pham P.K."/>
            <person name="Cheuk R.F."/>
            <person name="Karlin-Newmann G."/>
            <person name="Liu S.X."/>
            <person name="Lam B."/>
            <person name="Sakano H."/>
            <person name="Wu T."/>
            <person name="Yu G."/>
            <person name="Miranda M."/>
            <person name="Quach H.L."/>
            <person name="Tripp M."/>
            <person name="Chang C.H."/>
            <person name="Lee J.M."/>
            <person name="Toriumi M.J."/>
            <person name="Chan M.M."/>
            <person name="Tang C.C."/>
            <person name="Onodera C.S."/>
            <person name="Deng J.M."/>
            <person name="Akiyama K."/>
            <person name="Ansari Y."/>
            <person name="Arakawa T."/>
            <person name="Banh J."/>
            <person name="Banno F."/>
            <person name="Bowser L."/>
            <person name="Brooks S.Y."/>
            <person name="Carninci P."/>
            <person name="Chao Q."/>
            <person name="Choy N."/>
            <person name="Enju A."/>
            <person name="Goldsmith A.D."/>
            <person name="Gurjal M."/>
            <person name="Hansen N.F."/>
            <person name="Hayashizaki Y."/>
            <person name="Johnson-Hopson C."/>
            <person name="Hsuan V.W."/>
            <person name="Iida K."/>
            <person name="Karnes M."/>
            <person name="Khan S."/>
            <person name="Koesema E."/>
            <person name="Ishida J."/>
            <person name="Jiang P.X."/>
            <person name="Jones T."/>
            <person name="Kawai J."/>
            <person name="Kamiya A."/>
            <person name="Meyers C."/>
            <person name="Nakajima M."/>
            <person name="Narusaka M."/>
            <person name="Seki M."/>
            <person name="Sakurai T."/>
            <person name="Satou M."/>
            <person name="Tamse R."/>
            <person name="Vaysberg M."/>
            <person name="Wallender E.K."/>
            <person name="Wong C."/>
            <person name="Yamamura Y."/>
            <person name="Yuan S."/>
            <person name="Shinozaki K."/>
            <person name="Davis R.W."/>
            <person name="Theologis A."/>
            <person name="Ecker J.R."/>
        </authorList>
    </citation>
    <scope>NUCLEOTIDE SEQUENCE [LARGE SCALE MRNA]</scope>
    <source>
        <strain>cv. Columbia</strain>
    </source>
</reference>
<reference key="5">
    <citation type="submission" date="2002-03" db="EMBL/GenBank/DDBJ databases">
        <title>Full-length cDNA from Arabidopsis thaliana.</title>
        <authorList>
            <person name="Brover V.V."/>
            <person name="Troukhan M.E."/>
            <person name="Alexandrov N.A."/>
            <person name="Lu Y.-P."/>
            <person name="Flavell R.B."/>
            <person name="Feldmann K.A."/>
        </authorList>
    </citation>
    <scope>NUCLEOTIDE SEQUENCE [LARGE SCALE MRNA]</scope>
</reference>
<reference key="6">
    <citation type="journal article" date="2000" name="FEBS Lett.">
        <title>Functional identification of the glycerol permease activity of Arabidopsis thaliana NLM1 and NLM2 proteins by heterologous expression in Saccharomyces cerevisiae.</title>
        <authorList>
            <person name="Weig A.R."/>
            <person name="Jakob C.U."/>
        </authorList>
    </citation>
    <scope>FUNCTION</scope>
</reference>
<reference key="7">
    <citation type="journal article" date="2002" name="Genome Biol.">
        <title>From genome to function: the Arabidopsis aquaporins.</title>
        <authorList>
            <person name="Quigley F."/>
            <person name="Rosenberg J.M."/>
            <person name="Shachar-Hill Y."/>
            <person name="Bohnert H.J."/>
        </authorList>
    </citation>
    <scope>NOMENCLATURE</scope>
    <scope>TISSUE SPECIFICITY</scope>
</reference>
<name>NIP11_ARATH</name>
<feature type="chain" id="PRO_0000064062" description="Aquaporin NIP1-1">
    <location>
        <begin position="1"/>
        <end position="296"/>
    </location>
</feature>
<feature type="transmembrane region" description="Helical; Name=1" evidence="3">
    <location>
        <begin position="57"/>
        <end position="77"/>
    </location>
</feature>
<feature type="transmembrane region" description="Helical; Name=2" evidence="3">
    <location>
        <begin position="84"/>
        <end position="104"/>
    </location>
</feature>
<feature type="transmembrane region" description="Helical; Name=3" evidence="3">
    <location>
        <begin position="136"/>
        <end position="156"/>
    </location>
</feature>
<feature type="transmembrane region" description="Helical; Name=4" evidence="3">
    <location>
        <begin position="180"/>
        <end position="200"/>
    </location>
</feature>
<feature type="transmembrane region" description="Helical; Name=5" evidence="3">
    <location>
        <begin position="205"/>
        <end position="225"/>
    </location>
</feature>
<feature type="transmembrane region" description="Helical; Name=6" evidence="3">
    <location>
        <begin position="249"/>
        <end position="269"/>
    </location>
</feature>
<feature type="short sequence motif" description="NPA 1">
    <location>
        <begin position="114"/>
        <end position="116"/>
    </location>
</feature>
<feature type="short sequence motif" description="NPA 2">
    <location>
        <begin position="233"/>
        <end position="235"/>
    </location>
</feature>
<feature type="modified residue" description="N-acetylmethionine" evidence="2">
    <location>
        <position position="1"/>
    </location>
</feature>
<feature type="modified residue" description="Phosphoserine" evidence="1">
    <location>
        <position position="286"/>
    </location>
</feature>
<comment type="function">
    <text evidence="4">Water channel probably required to promote glycerol permeability and water transport across cell membranes.</text>
</comment>
<comment type="interaction">
    <interactant intactId="EBI-4424378">
        <id>Q8VZW1</id>
    </interactant>
    <interactant intactId="EBI-4425682">
        <id>Q9FZ98</id>
        <label>At1g28250</label>
    </interactant>
    <organismsDiffer>false</organismsDiffer>
    <experiments>3</experiments>
</comment>
<comment type="interaction">
    <interactant intactId="EBI-4424378">
        <id>Q8VZW1</id>
    </interactant>
    <interactant intactId="EBI-4466346">
        <id>Q9LPF1</id>
        <label>At1g44800</label>
    </interactant>
    <organismsDiffer>false</organismsDiffer>
    <experiments>2</experiments>
</comment>
<comment type="interaction">
    <interactant intactId="EBI-4424378">
        <id>Q8VZW1</id>
    </interactant>
    <interactant intactId="EBI-4457426">
        <id>Q94AJ5</id>
        <label>At1g80170</label>
    </interactant>
    <organismsDiffer>false</organismsDiffer>
    <experiments>2</experiments>
</comment>
<comment type="interaction">
    <interactant intactId="EBI-4424378">
        <id>Q8VZW1</id>
    </interactant>
    <interactant intactId="EBI-4439540">
        <id>Q9LDU6</id>
        <label>DWF5</label>
    </interactant>
    <organismsDiffer>false</organismsDiffer>
    <experiments>2</experiments>
</comment>
<comment type="interaction">
    <interactant intactId="EBI-4424378">
        <id>Q8VZW1</id>
    </interactant>
    <interactant intactId="EBI-4461393">
        <id>P27202</id>
        <label>PSBR</label>
    </interactant>
    <organismsDiffer>false</organismsDiffer>
    <experiments>2</experiments>
</comment>
<comment type="interaction">
    <interactant intactId="EBI-4424378">
        <id>Q8VZW1</id>
    </interactant>
    <interactant intactId="EBI-4434817">
        <id>Q9FFK1</id>
        <label>SYP31</label>
    </interactant>
    <organismsDiffer>false</organismsDiffer>
    <experiments>2</experiments>
</comment>
<comment type="subcellular location">
    <subcellularLocation>
        <location evidence="6">Membrane</location>
        <topology evidence="6">Multi-pass membrane protein</topology>
    </subcellularLocation>
</comment>
<comment type="tissue specificity">
    <text evidence="5">Expressed in roots.</text>
</comment>
<comment type="domain">
    <text>Aquaporins contain two tandem repeats each containing three membrane-spanning domains and a pore-forming loop with the signature motif Asn-Pro-Ala/Gly (NPA).</text>
</comment>
<comment type="similarity">
    <text evidence="6">Belongs to the MIP/aquaporin (TC 1.A.8) family. NIP (TC 1.A.8.12) subfamily.</text>
</comment>
<comment type="sequence caution" evidence="6">
    <conflict type="erroneous gene model prediction">
        <sequence resource="EMBL-CDS" id="CAA16760"/>
    </conflict>
</comment>
<comment type="sequence caution" evidence="6">
    <conflict type="erroneous initiation">
        <sequence resource="EMBL-CDS" id="CAA68906"/>
    </conflict>
</comment>
<comment type="sequence caution" evidence="6">
    <conflict type="erroneous gene model prediction">
        <sequence resource="EMBL-CDS" id="CAB78905"/>
    </conflict>
</comment>
<accession>Q8VZW1</accession>
<accession>O48595</accession>
<accession>O49416</accession>
<proteinExistence type="evidence at protein level"/>
<gene>
    <name type="primary">NIP1-1</name>
    <name type="synonym">NLM1</name>
    <name type="ordered locus">At4g19030</name>
    <name type="ORF">F13C5.200</name>
</gene>